<accession>Q8NC01</accession>
<accession>Q8IUW7</accession>
<accession>Q9NZH3</accession>
<proteinExistence type="evidence at protein level"/>
<protein>
    <recommendedName>
        <fullName>C-type lectin domain family 1 member A</fullName>
    </recommendedName>
    <alternativeName>
        <fullName>C-type lectin-like receptor 1</fullName>
        <shortName>CLEC-1</shortName>
    </alternativeName>
</protein>
<comment type="interaction">
    <interactant intactId="EBI-11996768">
        <id>Q8NC01</id>
    </interactant>
    <interactant intactId="EBI-2622997">
        <id>Q9HA82</id>
        <label>CERS4</label>
    </interactant>
    <organismsDiffer>false</organismsDiffer>
    <experiments>3</experiments>
</comment>
<comment type="interaction">
    <interactant intactId="EBI-11996768">
        <id>Q8NC01</id>
    </interactant>
    <interactant intactId="EBI-13335829">
        <id>Q5QGZ9</id>
        <label>CLEC12A</label>
    </interactant>
    <organismsDiffer>false</organismsDiffer>
    <experiments>3</experiments>
</comment>
<comment type="interaction">
    <interactant intactId="EBI-11996768">
        <id>Q8NC01</id>
    </interactant>
    <interactant intactId="EBI-2833872">
        <id>O15552</id>
        <label>FFAR2</label>
    </interactant>
    <organismsDiffer>false</organismsDiffer>
    <experiments>3</experiments>
</comment>
<comment type="interaction">
    <interactant intactId="EBI-11996768">
        <id>Q8NC01</id>
    </interactant>
    <interactant intactId="EBI-12142257">
        <id>Q8TBE3</id>
        <label>FNDC9</label>
    </interactant>
    <organismsDiffer>false</organismsDiffer>
    <experiments>3</experiments>
</comment>
<comment type="interaction">
    <interactant intactId="EBI-11996768">
        <id>Q8NC01</id>
    </interactant>
    <interactant intactId="EBI-17458373">
        <id>P48165</id>
        <label>GJA8</label>
    </interactant>
    <organismsDiffer>false</organismsDiffer>
    <experiments>3</experiments>
</comment>
<comment type="interaction">
    <interactant intactId="EBI-11996768">
        <id>Q8NC01</id>
    </interactant>
    <interactant intactId="EBI-13345167">
        <id>Q8TDT2</id>
        <label>GPR152</label>
    </interactant>
    <organismsDiffer>false</organismsDiffer>
    <experiments>3</experiments>
</comment>
<comment type="interaction">
    <interactant intactId="EBI-11996768">
        <id>Q8NC01</id>
    </interactant>
    <interactant intactId="EBI-11721746">
        <id>Q8TED1</id>
        <label>GPX8</label>
    </interactant>
    <organismsDiffer>false</organismsDiffer>
    <experiments>3</experiments>
</comment>
<comment type="interaction">
    <interactant intactId="EBI-11996768">
        <id>Q8NC01</id>
    </interactant>
    <interactant intactId="EBI-11304917">
        <id>Q8N386</id>
        <label>LRRC25</label>
    </interactant>
    <organismsDiffer>false</organismsDiffer>
    <experiments>3</experiments>
</comment>
<comment type="interaction">
    <interactant intactId="EBI-11996768">
        <id>Q8NC01</id>
    </interactant>
    <interactant intactId="EBI-3925442">
        <id>Q9HCJ2</id>
        <label>LRRC4C</label>
    </interactant>
    <organismsDiffer>false</organismsDiffer>
    <experiments>3</experiments>
</comment>
<comment type="interaction">
    <interactant intactId="EBI-11996768">
        <id>Q8NC01</id>
    </interactant>
    <interactant intactId="EBI-750085">
        <id>Q9Y676</id>
        <label>MRPS18B</label>
    </interactant>
    <organismsDiffer>false</organismsDiffer>
    <experiments>3</experiments>
</comment>
<comment type="interaction">
    <interactant intactId="EBI-11996768">
        <id>Q8NC01</id>
    </interactant>
    <interactant intactId="EBI-2466594">
        <id>Q6ZMZ0</id>
        <label>RNF19B</label>
    </interactant>
    <organismsDiffer>false</organismsDiffer>
    <experiments>3</experiments>
</comment>
<comment type="interaction">
    <interactant intactId="EBI-11996768">
        <id>Q8NC01</id>
    </interactant>
    <interactant intactId="EBI-712466">
        <id>Q16623</id>
        <label>STX1A</label>
    </interactant>
    <organismsDiffer>false</organismsDiffer>
    <experiments>3</experiments>
</comment>
<comment type="interaction">
    <interactant intactId="EBI-11996768">
        <id>Q8NC01</id>
    </interactant>
    <interactant intactId="EBI-11996766">
        <id>Q8N609</id>
        <label>TRAM1L1</label>
    </interactant>
    <organismsDiffer>false</organismsDiffer>
    <experiments>3</experiments>
</comment>
<comment type="subcellular location">
    <subcellularLocation>
        <location evidence="8">Membrane</location>
        <topology evidence="8">Single-pass type II membrane protein</topology>
    </subcellularLocation>
</comment>
<comment type="tissue specificity">
    <text evidence="4">Expressed preferentially in dendritic cells.</text>
</comment>
<evidence type="ECO:0000255" key="1"/>
<evidence type="ECO:0000255" key="2">
    <source>
        <dbReference type="PROSITE-ProRule" id="PRU00040"/>
    </source>
</evidence>
<evidence type="ECO:0000256" key="3">
    <source>
        <dbReference type="SAM" id="MobiDB-lite"/>
    </source>
</evidence>
<evidence type="ECO:0000269" key="4">
    <source>
    </source>
</evidence>
<evidence type="ECO:0000269" key="5">
    <source>
    </source>
</evidence>
<evidence type="ECO:0000269" key="6">
    <source>
    </source>
</evidence>
<evidence type="ECO:0000269" key="7">
    <source>
    </source>
</evidence>
<evidence type="ECO:0000305" key="8"/>
<feature type="chain" id="PRO_0000046609" description="C-type lectin domain family 1 member A">
    <location>
        <begin position="1"/>
        <end position="280"/>
    </location>
</feature>
<feature type="topological domain" description="Cytoplasmic" evidence="1">
    <location>
        <begin position="1"/>
        <end position="52"/>
    </location>
</feature>
<feature type="transmembrane region" description="Helical; Signal-anchor for type II membrane protein" evidence="1">
    <location>
        <begin position="53"/>
        <end position="73"/>
    </location>
</feature>
<feature type="topological domain" description="Extracellular" evidence="1">
    <location>
        <begin position="74"/>
        <end position="280"/>
    </location>
</feature>
<feature type="domain" description="C-type lectin" evidence="2">
    <location>
        <begin position="144"/>
        <end position="258"/>
    </location>
</feature>
<feature type="region of interest" description="Disordered" evidence="3">
    <location>
        <begin position="1"/>
        <end position="44"/>
    </location>
</feature>
<feature type="compositionally biased region" description="Polar residues" evidence="3">
    <location>
        <begin position="18"/>
        <end position="30"/>
    </location>
</feature>
<feature type="compositionally biased region" description="Basic and acidic residues" evidence="3">
    <location>
        <begin position="31"/>
        <end position="42"/>
    </location>
</feature>
<feature type="glycosylation site" description="N-linked (GlcNAc...) asparagine" evidence="1">
    <location>
        <position position="95"/>
    </location>
</feature>
<feature type="glycosylation site" description="N-linked (GlcNAc...) asparagine" evidence="1">
    <location>
        <position position="169"/>
    </location>
</feature>
<feature type="disulfide bond" evidence="2">
    <location>
        <begin position="165"/>
        <end position="257"/>
    </location>
</feature>
<feature type="disulfide bond" evidence="2">
    <location>
        <begin position="236"/>
        <end position="249"/>
    </location>
</feature>
<feature type="sequence variant" id="VAR_050106" description="In dbSNP:rs2306894." evidence="4 5 6 7">
    <original>G</original>
    <variation>A</variation>
    <location>
        <position position="26"/>
    </location>
</feature>
<feature type="sequence conflict" description="In Ref. 1; AAF36830." evidence="8" ref="1">
    <original>L</original>
    <variation>W</variation>
    <location>
        <position position="68"/>
    </location>
</feature>
<name>CLC1A_HUMAN</name>
<dbReference type="EMBL" id="AF200949">
    <property type="protein sequence ID" value="AAF36830.1"/>
    <property type="molecule type" value="mRNA"/>
</dbReference>
<dbReference type="EMBL" id="AY358587">
    <property type="protein sequence ID" value="AAQ88950.1"/>
    <property type="molecule type" value="mRNA"/>
</dbReference>
<dbReference type="EMBL" id="AK075114">
    <property type="protein sequence ID" value="BAC11410.1"/>
    <property type="molecule type" value="mRNA"/>
</dbReference>
<dbReference type="EMBL" id="BC039072">
    <property type="protein sequence ID" value="AAH39072.1"/>
    <property type="molecule type" value="mRNA"/>
</dbReference>
<dbReference type="EMBL" id="BC067746">
    <property type="protein sequence ID" value="AAH67746.1"/>
    <property type="molecule type" value="mRNA"/>
</dbReference>
<dbReference type="CCDS" id="CCDS8612.1"/>
<dbReference type="RefSeq" id="NP_001284677.1">
    <property type="nucleotide sequence ID" value="NM_001297748.1"/>
</dbReference>
<dbReference type="RefSeq" id="NP_001284678.1">
    <property type="nucleotide sequence ID" value="NM_001297749.1"/>
</dbReference>
<dbReference type="RefSeq" id="NP_001284679.1">
    <property type="nucleotide sequence ID" value="NM_001297750.1"/>
</dbReference>
<dbReference type="RefSeq" id="NP_001284680.1">
    <property type="nucleotide sequence ID" value="NM_001297751.1"/>
</dbReference>
<dbReference type="RefSeq" id="NP_057595.2">
    <property type="nucleotide sequence ID" value="NM_016511.3"/>
</dbReference>
<dbReference type="SMR" id="Q8NC01"/>
<dbReference type="BioGRID" id="119421">
    <property type="interactions" value="17"/>
</dbReference>
<dbReference type="FunCoup" id="Q8NC01">
    <property type="interactions" value="580"/>
</dbReference>
<dbReference type="IntAct" id="Q8NC01">
    <property type="interactions" value="15"/>
</dbReference>
<dbReference type="STRING" id="9606.ENSP00000326407"/>
<dbReference type="GlyCosmos" id="Q8NC01">
    <property type="glycosylation" value="2 sites, No reported glycans"/>
</dbReference>
<dbReference type="GlyGen" id="Q8NC01">
    <property type="glycosylation" value="2 sites"/>
</dbReference>
<dbReference type="PhosphoSitePlus" id="Q8NC01"/>
<dbReference type="BioMuta" id="CLEC1A"/>
<dbReference type="DMDM" id="116241301"/>
<dbReference type="MassIVE" id="Q8NC01"/>
<dbReference type="PaxDb" id="9606-ENSP00000326407"/>
<dbReference type="PeptideAtlas" id="Q8NC01"/>
<dbReference type="ProteomicsDB" id="72840"/>
<dbReference type="Antibodypedia" id="23227">
    <property type="antibodies" value="226 antibodies from 26 providers"/>
</dbReference>
<dbReference type="DNASU" id="51267"/>
<dbReference type="Ensembl" id="ENST00000315330.8">
    <property type="protein sequence ID" value="ENSP00000326407.4"/>
    <property type="gene ID" value="ENSG00000150048.10"/>
</dbReference>
<dbReference type="GeneID" id="51267"/>
<dbReference type="KEGG" id="hsa:51267"/>
<dbReference type="MANE-Select" id="ENST00000315330.8">
    <property type="protein sequence ID" value="ENSP00000326407.4"/>
    <property type="RefSeq nucleotide sequence ID" value="NM_016511.4"/>
    <property type="RefSeq protein sequence ID" value="NP_057595.2"/>
</dbReference>
<dbReference type="UCSC" id="uc001qxb.4">
    <property type="organism name" value="human"/>
</dbReference>
<dbReference type="AGR" id="HGNC:24355"/>
<dbReference type="CTD" id="51267"/>
<dbReference type="DisGeNET" id="51267"/>
<dbReference type="GeneCards" id="CLEC1A"/>
<dbReference type="HGNC" id="HGNC:24355">
    <property type="gene designation" value="CLEC1A"/>
</dbReference>
<dbReference type="HPA" id="ENSG00000150048">
    <property type="expression patterns" value="Tissue enhanced (lymphoid tissue, placenta)"/>
</dbReference>
<dbReference type="MalaCards" id="CLEC1A"/>
<dbReference type="MIM" id="606782">
    <property type="type" value="gene"/>
</dbReference>
<dbReference type="neXtProt" id="NX_Q8NC01"/>
<dbReference type="OpenTargets" id="ENSG00000150048"/>
<dbReference type="PharmGKB" id="PA142672097"/>
<dbReference type="VEuPathDB" id="HostDB:ENSG00000150048"/>
<dbReference type="eggNOG" id="KOG4297">
    <property type="taxonomic scope" value="Eukaryota"/>
</dbReference>
<dbReference type="GeneTree" id="ENSGT00940000161945"/>
<dbReference type="InParanoid" id="Q8NC01"/>
<dbReference type="OMA" id="GWYWEDG"/>
<dbReference type="OrthoDB" id="418245at2759"/>
<dbReference type="PAN-GO" id="Q8NC01">
    <property type="GO annotations" value="3 GO annotations based on evolutionary models"/>
</dbReference>
<dbReference type="PhylomeDB" id="Q8NC01"/>
<dbReference type="TreeFam" id="TF336674"/>
<dbReference type="PathwayCommons" id="Q8NC01"/>
<dbReference type="SignaLink" id="Q8NC01"/>
<dbReference type="BioGRID-ORCS" id="51267">
    <property type="hits" value="8 hits in 1141 CRISPR screens"/>
</dbReference>
<dbReference type="ChiTaRS" id="CLEC1A">
    <property type="organism name" value="human"/>
</dbReference>
<dbReference type="GeneWiki" id="CLEC1A"/>
<dbReference type="GenomeRNAi" id="51267"/>
<dbReference type="Pharos" id="Q8NC01">
    <property type="development level" value="Tbio"/>
</dbReference>
<dbReference type="PRO" id="PR:Q8NC01"/>
<dbReference type="Proteomes" id="UP000005640">
    <property type="component" value="Chromosome 12"/>
</dbReference>
<dbReference type="RNAct" id="Q8NC01">
    <property type="molecule type" value="protein"/>
</dbReference>
<dbReference type="Bgee" id="ENSG00000150048">
    <property type="expression patterns" value="Expressed in placenta and 120 other cell types or tissues"/>
</dbReference>
<dbReference type="ExpressionAtlas" id="Q8NC01">
    <property type="expression patterns" value="baseline and differential"/>
</dbReference>
<dbReference type="GO" id="GO:0005886">
    <property type="term" value="C:plasma membrane"/>
    <property type="evidence" value="ECO:0000318"/>
    <property type="project" value="GO_Central"/>
</dbReference>
<dbReference type="GO" id="GO:0030246">
    <property type="term" value="F:carbohydrate binding"/>
    <property type="evidence" value="ECO:0007669"/>
    <property type="project" value="UniProtKB-KW"/>
</dbReference>
<dbReference type="GO" id="GO:0004888">
    <property type="term" value="F:transmembrane signaling receptor activity"/>
    <property type="evidence" value="ECO:0000318"/>
    <property type="project" value="GO_Central"/>
</dbReference>
<dbReference type="GO" id="GO:0007166">
    <property type="term" value="P:cell surface receptor signaling pathway"/>
    <property type="evidence" value="ECO:0000304"/>
    <property type="project" value="ProtInc"/>
</dbReference>
<dbReference type="GO" id="GO:0007165">
    <property type="term" value="P:signal transduction"/>
    <property type="evidence" value="ECO:0000318"/>
    <property type="project" value="GO_Central"/>
</dbReference>
<dbReference type="CDD" id="cd03593">
    <property type="entry name" value="CLECT_NK_receptors_like"/>
    <property type="match status" value="1"/>
</dbReference>
<dbReference type="FunFam" id="3.10.100.10:FF:000074">
    <property type="entry name" value="C-type lectin domain family 1 member A"/>
    <property type="match status" value="1"/>
</dbReference>
<dbReference type="Gene3D" id="3.10.100.10">
    <property type="entry name" value="Mannose-Binding Protein A, subunit A"/>
    <property type="match status" value="1"/>
</dbReference>
<dbReference type="InterPro" id="IPR001304">
    <property type="entry name" value="C-type_lectin-like"/>
</dbReference>
<dbReference type="InterPro" id="IPR016186">
    <property type="entry name" value="C-type_lectin-like/link_sf"/>
</dbReference>
<dbReference type="InterPro" id="IPR052309">
    <property type="entry name" value="C-type_Lectin_Domain_Fam1"/>
</dbReference>
<dbReference type="InterPro" id="IPR016187">
    <property type="entry name" value="CTDL_fold"/>
</dbReference>
<dbReference type="InterPro" id="IPR033992">
    <property type="entry name" value="NKR-like_CTLD"/>
</dbReference>
<dbReference type="PANTHER" id="PTHR46490:SF1">
    <property type="entry name" value="C-TYPE LECTIN DOMAIN FAMILY 1 MEMBER A"/>
    <property type="match status" value="1"/>
</dbReference>
<dbReference type="PANTHER" id="PTHR46490">
    <property type="entry name" value="C-TYPE LECTIN DOMAIN FAMILY 12 MEMBER A-RELATED"/>
    <property type="match status" value="1"/>
</dbReference>
<dbReference type="Pfam" id="PF00059">
    <property type="entry name" value="Lectin_C"/>
    <property type="match status" value="1"/>
</dbReference>
<dbReference type="SMART" id="SM00034">
    <property type="entry name" value="CLECT"/>
    <property type="match status" value="1"/>
</dbReference>
<dbReference type="SUPFAM" id="SSF56436">
    <property type="entry name" value="C-type lectin-like"/>
    <property type="match status" value="1"/>
</dbReference>
<dbReference type="PROSITE" id="PS50041">
    <property type="entry name" value="C_TYPE_LECTIN_2"/>
    <property type="match status" value="1"/>
</dbReference>
<sequence length="280" mass="31952">MQAKYSSTRDMLDDDGDTTMSLHSQGSATTRHPEPRRTEHRAPSSTWRPVALTLLTLCLVLLIGLAALGLLFFQYYQLSNTGQDTISQMEERLGNTSQELQSLQVQNIKLAGSLQHVAEKLCRELYNKAGAHRCSPCTEQWKWHGDNCYQFYKDSKSWEDCKYFCLSENSTMLKINKQEDLEFAASQSYSEFFYSYWTGLLRPDSGKAWLWMDGTPFTSELFHIIIDVTSPRSRDCVAILNGMIFSKDCKELKRCVCERRAGMVKPESLHVPPETLGEGD</sequence>
<reference key="1">
    <citation type="journal article" date="2000" name="Eur. J. Immunol.">
        <title>Molecular characterization of two novel C-type lectin-like receptors, one of which is selectively expressed in human dendritic cells.</title>
        <authorList>
            <person name="Colonna M."/>
            <person name="Samaridis J."/>
            <person name="Angman L."/>
        </authorList>
    </citation>
    <scope>NUCLEOTIDE SEQUENCE [MRNA]</scope>
    <scope>TISSUE SPECIFICITY</scope>
    <scope>VARIANT ALA-26</scope>
</reference>
<reference key="2">
    <citation type="journal article" date="2003" name="Genome Res.">
        <title>The secreted protein discovery initiative (SPDI), a large-scale effort to identify novel human secreted and transmembrane proteins: a bioinformatics assessment.</title>
        <authorList>
            <person name="Clark H.F."/>
            <person name="Gurney A.L."/>
            <person name="Abaya E."/>
            <person name="Baker K."/>
            <person name="Baldwin D.T."/>
            <person name="Brush J."/>
            <person name="Chen J."/>
            <person name="Chow B."/>
            <person name="Chui C."/>
            <person name="Crowley C."/>
            <person name="Currell B."/>
            <person name="Deuel B."/>
            <person name="Dowd P."/>
            <person name="Eaton D."/>
            <person name="Foster J.S."/>
            <person name="Grimaldi C."/>
            <person name="Gu Q."/>
            <person name="Hass P.E."/>
            <person name="Heldens S."/>
            <person name="Huang A."/>
            <person name="Kim H.S."/>
            <person name="Klimowski L."/>
            <person name="Jin Y."/>
            <person name="Johnson S."/>
            <person name="Lee J."/>
            <person name="Lewis L."/>
            <person name="Liao D."/>
            <person name="Mark M.R."/>
            <person name="Robbie E."/>
            <person name="Sanchez C."/>
            <person name="Schoenfeld J."/>
            <person name="Seshagiri S."/>
            <person name="Simmons L."/>
            <person name="Singh J."/>
            <person name="Smith V."/>
            <person name="Stinson J."/>
            <person name="Vagts A."/>
            <person name="Vandlen R.L."/>
            <person name="Watanabe C."/>
            <person name="Wieand D."/>
            <person name="Woods K."/>
            <person name="Xie M.-H."/>
            <person name="Yansura D.G."/>
            <person name="Yi S."/>
            <person name="Yu G."/>
            <person name="Yuan J."/>
            <person name="Zhang M."/>
            <person name="Zhang Z."/>
            <person name="Goddard A.D."/>
            <person name="Wood W.I."/>
            <person name="Godowski P.J."/>
            <person name="Gray A.M."/>
        </authorList>
    </citation>
    <scope>NUCLEOTIDE SEQUENCE [LARGE SCALE MRNA]</scope>
    <scope>VARIANT ALA-26</scope>
</reference>
<reference key="3">
    <citation type="journal article" date="2004" name="Nat. Genet.">
        <title>Complete sequencing and characterization of 21,243 full-length human cDNAs.</title>
        <authorList>
            <person name="Ota T."/>
            <person name="Suzuki Y."/>
            <person name="Nishikawa T."/>
            <person name="Otsuki T."/>
            <person name="Sugiyama T."/>
            <person name="Irie R."/>
            <person name="Wakamatsu A."/>
            <person name="Hayashi K."/>
            <person name="Sato H."/>
            <person name="Nagai K."/>
            <person name="Kimura K."/>
            <person name="Makita H."/>
            <person name="Sekine M."/>
            <person name="Obayashi M."/>
            <person name="Nishi T."/>
            <person name="Shibahara T."/>
            <person name="Tanaka T."/>
            <person name="Ishii S."/>
            <person name="Yamamoto J."/>
            <person name="Saito K."/>
            <person name="Kawai Y."/>
            <person name="Isono Y."/>
            <person name="Nakamura Y."/>
            <person name="Nagahari K."/>
            <person name="Murakami K."/>
            <person name="Yasuda T."/>
            <person name="Iwayanagi T."/>
            <person name="Wagatsuma M."/>
            <person name="Shiratori A."/>
            <person name="Sudo H."/>
            <person name="Hosoiri T."/>
            <person name="Kaku Y."/>
            <person name="Kodaira H."/>
            <person name="Kondo H."/>
            <person name="Sugawara M."/>
            <person name="Takahashi M."/>
            <person name="Kanda K."/>
            <person name="Yokoi T."/>
            <person name="Furuya T."/>
            <person name="Kikkawa E."/>
            <person name="Omura Y."/>
            <person name="Abe K."/>
            <person name="Kamihara K."/>
            <person name="Katsuta N."/>
            <person name="Sato K."/>
            <person name="Tanikawa M."/>
            <person name="Yamazaki M."/>
            <person name="Ninomiya K."/>
            <person name="Ishibashi T."/>
            <person name="Yamashita H."/>
            <person name="Murakawa K."/>
            <person name="Fujimori K."/>
            <person name="Tanai H."/>
            <person name="Kimata M."/>
            <person name="Watanabe M."/>
            <person name="Hiraoka S."/>
            <person name="Chiba Y."/>
            <person name="Ishida S."/>
            <person name="Ono Y."/>
            <person name="Takiguchi S."/>
            <person name="Watanabe S."/>
            <person name="Yosida M."/>
            <person name="Hotuta T."/>
            <person name="Kusano J."/>
            <person name="Kanehori K."/>
            <person name="Takahashi-Fujii A."/>
            <person name="Hara H."/>
            <person name="Tanase T.-O."/>
            <person name="Nomura Y."/>
            <person name="Togiya S."/>
            <person name="Komai F."/>
            <person name="Hara R."/>
            <person name="Takeuchi K."/>
            <person name="Arita M."/>
            <person name="Imose N."/>
            <person name="Musashino K."/>
            <person name="Yuuki H."/>
            <person name="Oshima A."/>
            <person name="Sasaki N."/>
            <person name="Aotsuka S."/>
            <person name="Yoshikawa Y."/>
            <person name="Matsunawa H."/>
            <person name="Ichihara T."/>
            <person name="Shiohata N."/>
            <person name="Sano S."/>
            <person name="Moriya S."/>
            <person name="Momiyama H."/>
            <person name="Satoh N."/>
            <person name="Takami S."/>
            <person name="Terashima Y."/>
            <person name="Suzuki O."/>
            <person name="Nakagawa S."/>
            <person name="Senoh A."/>
            <person name="Mizoguchi H."/>
            <person name="Goto Y."/>
            <person name="Shimizu F."/>
            <person name="Wakebe H."/>
            <person name="Hishigaki H."/>
            <person name="Watanabe T."/>
            <person name="Sugiyama A."/>
            <person name="Takemoto M."/>
            <person name="Kawakami B."/>
            <person name="Yamazaki M."/>
            <person name="Watanabe K."/>
            <person name="Kumagai A."/>
            <person name="Itakura S."/>
            <person name="Fukuzumi Y."/>
            <person name="Fujimori Y."/>
            <person name="Komiyama M."/>
            <person name="Tashiro H."/>
            <person name="Tanigami A."/>
            <person name="Fujiwara T."/>
            <person name="Ono T."/>
            <person name="Yamada K."/>
            <person name="Fujii Y."/>
            <person name="Ozaki K."/>
            <person name="Hirao M."/>
            <person name="Ohmori Y."/>
            <person name="Kawabata A."/>
            <person name="Hikiji T."/>
            <person name="Kobatake N."/>
            <person name="Inagaki H."/>
            <person name="Ikema Y."/>
            <person name="Okamoto S."/>
            <person name="Okitani R."/>
            <person name="Kawakami T."/>
            <person name="Noguchi S."/>
            <person name="Itoh T."/>
            <person name="Shigeta K."/>
            <person name="Senba T."/>
            <person name="Matsumura K."/>
            <person name="Nakajima Y."/>
            <person name="Mizuno T."/>
            <person name="Morinaga M."/>
            <person name="Sasaki M."/>
            <person name="Togashi T."/>
            <person name="Oyama M."/>
            <person name="Hata H."/>
            <person name="Watanabe M."/>
            <person name="Komatsu T."/>
            <person name="Mizushima-Sugano J."/>
            <person name="Satoh T."/>
            <person name="Shirai Y."/>
            <person name="Takahashi Y."/>
            <person name="Nakagawa K."/>
            <person name="Okumura K."/>
            <person name="Nagase T."/>
            <person name="Nomura N."/>
            <person name="Kikuchi H."/>
            <person name="Masuho Y."/>
            <person name="Yamashita R."/>
            <person name="Nakai K."/>
            <person name="Yada T."/>
            <person name="Nakamura Y."/>
            <person name="Ohara O."/>
            <person name="Isogai T."/>
            <person name="Sugano S."/>
        </authorList>
    </citation>
    <scope>NUCLEOTIDE SEQUENCE [LARGE SCALE MRNA]</scope>
    <scope>VARIANT ALA-26</scope>
    <source>
        <tissue>Placenta</tissue>
    </source>
</reference>
<reference key="4">
    <citation type="journal article" date="2004" name="Genome Res.">
        <title>The status, quality, and expansion of the NIH full-length cDNA project: the Mammalian Gene Collection (MGC).</title>
        <authorList>
            <consortium name="The MGC Project Team"/>
        </authorList>
    </citation>
    <scope>NUCLEOTIDE SEQUENCE [LARGE SCALE MRNA]</scope>
    <scope>VARIANT ALA-26</scope>
    <source>
        <tissue>Brain</tissue>
        <tissue>Placenta</tissue>
    </source>
</reference>
<gene>
    <name type="primary">CLEC1A</name>
    <name type="synonym">CLEC1</name>
    <name type="ORF">UNQ569/PRO1131</name>
</gene>
<keyword id="KW-1015">Disulfide bond</keyword>
<keyword id="KW-0325">Glycoprotein</keyword>
<keyword id="KW-0430">Lectin</keyword>
<keyword id="KW-0472">Membrane</keyword>
<keyword id="KW-1267">Proteomics identification</keyword>
<keyword id="KW-1185">Reference proteome</keyword>
<keyword id="KW-0735">Signal-anchor</keyword>
<keyword id="KW-0812">Transmembrane</keyword>
<keyword id="KW-1133">Transmembrane helix</keyword>
<organism>
    <name type="scientific">Homo sapiens</name>
    <name type="common">Human</name>
    <dbReference type="NCBI Taxonomy" id="9606"/>
    <lineage>
        <taxon>Eukaryota</taxon>
        <taxon>Metazoa</taxon>
        <taxon>Chordata</taxon>
        <taxon>Craniata</taxon>
        <taxon>Vertebrata</taxon>
        <taxon>Euteleostomi</taxon>
        <taxon>Mammalia</taxon>
        <taxon>Eutheria</taxon>
        <taxon>Euarchontoglires</taxon>
        <taxon>Primates</taxon>
        <taxon>Haplorrhini</taxon>
        <taxon>Catarrhini</taxon>
        <taxon>Hominidae</taxon>
        <taxon>Homo</taxon>
    </lineage>
</organism>